<gene>
    <name evidence="1" type="primary">murA</name>
    <name type="ordered locus">Sbal_3656</name>
</gene>
<name>MURA_SHEB5</name>
<organism>
    <name type="scientific">Shewanella baltica (strain OS155 / ATCC BAA-1091)</name>
    <dbReference type="NCBI Taxonomy" id="325240"/>
    <lineage>
        <taxon>Bacteria</taxon>
        <taxon>Pseudomonadati</taxon>
        <taxon>Pseudomonadota</taxon>
        <taxon>Gammaproteobacteria</taxon>
        <taxon>Alteromonadales</taxon>
        <taxon>Shewanellaceae</taxon>
        <taxon>Shewanella</taxon>
    </lineage>
</organism>
<protein>
    <recommendedName>
        <fullName evidence="1">UDP-N-acetylglucosamine 1-carboxyvinyltransferase</fullName>
        <ecNumber evidence="1">2.5.1.7</ecNumber>
    </recommendedName>
    <alternativeName>
        <fullName evidence="1">Enoylpyruvate transferase</fullName>
    </alternativeName>
    <alternativeName>
        <fullName evidence="1">UDP-N-acetylglucosamine enolpyruvyl transferase</fullName>
        <shortName evidence="1">EPT</shortName>
    </alternativeName>
</protein>
<comment type="function">
    <text evidence="1">Cell wall formation. Adds enolpyruvyl to UDP-N-acetylglucosamine.</text>
</comment>
<comment type="catalytic activity">
    <reaction evidence="1">
        <text>phosphoenolpyruvate + UDP-N-acetyl-alpha-D-glucosamine = UDP-N-acetyl-3-O-(1-carboxyvinyl)-alpha-D-glucosamine + phosphate</text>
        <dbReference type="Rhea" id="RHEA:18681"/>
        <dbReference type="ChEBI" id="CHEBI:43474"/>
        <dbReference type="ChEBI" id="CHEBI:57705"/>
        <dbReference type="ChEBI" id="CHEBI:58702"/>
        <dbReference type="ChEBI" id="CHEBI:68483"/>
        <dbReference type="EC" id="2.5.1.7"/>
    </reaction>
</comment>
<comment type="pathway">
    <text evidence="1">Cell wall biogenesis; peptidoglycan biosynthesis.</text>
</comment>
<comment type="subcellular location">
    <subcellularLocation>
        <location evidence="1">Cytoplasm</location>
    </subcellularLocation>
</comment>
<comment type="similarity">
    <text evidence="1">Belongs to the EPSP synthase family. MurA subfamily.</text>
</comment>
<feature type="chain" id="PRO_1000023098" description="UDP-N-acetylglucosamine 1-carboxyvinyltransferase">
    <location>
        <begin position="1"/>
        <end position="419"/>
    </location>
</feature>
<feature type="active site" description="Proton donor" evidence="1">
    <location>
        <position position="117"/>
    </location>
</feature>
<feature type="binding site" evidence="1">
    <location>
        <begin position="22"/>
        <end position="23"/>
    </location>
    <ligand>
        <name>phosphoenolpyruvate</name>
        <dbReference type="ChEBI" id="CHEBI:58702"/>
    </ligand>
</feature>
<feature type="binding site" evidence="1">
    <location>
        <position position="93"/>
    </location>
    <ligand>
        <name>UDP-N-acetyl-alpha-D-glucosamine</name>
        <dbReference type="ChEBI" id="CHEBI:57705"/>
    </ligand>
</feature>
<feature type="binding site" evidence="1">
    <location>
        <position position="307"/>
    </location>
    <ligand>
        <name>UDP-N-acetyl-alpha-D-glucosamine</name>
        <dbReference type="ChEBI" id="CHEBI:57705"/>
    </ligand>
</feature>
<feature type="binding site" evidence="1">
    <location>
        <position position="329"/>
    </location>
    <ligand>
        <name>UDP-N-acetyl-alpha-D-glucosamine</name>
        <dbReference type="ChEBI" id="CHEBI:57705"/>
    </ligand>
</feature>
<feature type="modified residue" description="2-(S-cysteinyl)pyruvic acid O-phosphothioketal" evidence="1">
    <location>
        <position position="117"/>
    </location>
</feature>
<accession>A3D8R8</accession>
<keyword id="KW-0131">Cell cycle</keyword>
<keyword id="KW-0132">Cell division</keyword>
<keyword id="KW-0133">Cell shape</keyword>
<keyword id="KW-0961">Cell wall biogenesis/degradation</keyword>
<keyword id="KW-0963">Cytoplasm</keyword>
<keyword id="KW-0573">Peptidoglycan synthesis</keyword>
<keyword id="KW-0670">Pyruvate</keyword>
<keyword id="KW-1185">Reference proteome</keyword>
<keyword id="KW-0808">Transferase</keyword>
<evidence type="ECO:0000255" key="1">
    <source>
        <dbReference type="HAMAP-Rule" id="MF_00111"/>
    </source>
</evidence>
<sequence length="419" mass="44674">MDKLTIQASPPLAGDVIISGAKNAALPILMAGVLAETDFVVSNVPNLRDVTTSCKLLRCLGAEVTELGDGQIRISTTNLNEFCAPYDLVKTMRASILILGPLLARYGTADVSLPGGCAIGARPVNLHLHGLEMMGAKIEVKEGYIKARVDGRLKGAHIFMDMVSVGATENLLMAAALADGETVIENAAREPEVIDLANCLIAMGAKITGVGSATLRIQGVERLQGCNYRVMPDRIETGSFLVAAAVTRGRIRCLKADPASLESVIAKLEDAGAKITTGEDWIELDMQGKRPKAVNIKTAPYPGFPTDMQAQFCVLNALAQGTATITETIFENRFMHVPELIRMGATMELEGNTCIIQGIESLSGAQVMATDLRASASLVIAGLVADGKTIVDRIYHLDRGYEHIENKFQGLGAQVVRTQ</sequence>
<reference key="1">
    <citation type="submission" date="2007-02" db="EMBL/GenBank/DDBJ databases">
        <title>Complete sequence of chromosome of Shewanella baltica OS155.</title>
        <authorList>
            <consortium name="US DOE Joint Genome Institute"/>
            <person name="Copeland A."/>
            <person name="Lucas S."/>
            <person name="Lapidus A."/>
            <person name="Barry K."/>
            <person name="Detter J.C."/>
            <person name="Glavina del Rio T."/>
            <person name="Hammon N."/>
            <person name="Israni S."/>
            <person name="Dalin E."/>
            <person name="Tice H."/>
            <person name="Pitluck S."/>
            <person name="Sims D.R."/>
            <person name="Brettin T."/>
            <person name="Bruce D."/>
            <person name="Han C."/>
            <person name="Tapia R."/>
            <person name="Brainard J."/>
            <person name="Schmutz J."/>
            <person name="Larimer F."/>
            <person name="Land M."/>
            <person name="Hauser L."/>
            <person name="Kyrpides N."/>
            <person name="Mikhailova N."/>
            <person name="Brettar I."/>
            <person name="Klappenbach J."/>
            <person name="Konstantinidis K."/>
            <person name="Rodrigues J."/>
            <person name="Tiedje J."/>
            <person name="Richardson P."/>
        </authorList>
    </citation>
    <scope>NUCLEOTIDE SEQUENCE [LARGE SCALE GENOMIC DNA]</scope>
    <source>
        <strain>OS155 / ATCC BAA-1091</strain>
    </source>
</reference>
<dbReference type="EC" id="2.5.1.7" evidence="1"/>
<dbReference type="EMBL" id="CP000563">
    <property type="protein sequence ID" value="ABN63131.1"/>
    <property type="molecule type" value="Genomic_DNA"/>
</dbReference>
<dbReference type="RefSeq" id="WP_006083057.1">
    <property type="nucleotide sequence ID" value="NC_009052.1"/>
</dbReference>
<dbReference type="SMR" id="A3D8R8"/>
<dbReference type="STRING" id="325240.Sbal_3656"/>
<dbReference type="GeneID" id="11774577"/>
<dbReference type="KEGG" id="sbl:Sbal_3656"/>
<dbReference type="HOGENOM" id="CLU_027387_0_0_6"/>
<dbReference type="OrthoDB" id="9803760at2"/>
<dbReference type="UniPathway" id="UPA00219"/>
<dbReference type="Proteomes" id="UP000001557">
    <property type="component" value="Chromosome"/>
</dbReference>
<dbReference type="GO" id="GO:0005737">
    <property type="term" value="C:cytoplasm"/>
    <property type="evidence" value="ECO:0007669"/>
    <property type="project" value="UniProtKB-SubCell"/>
</dbReference>
<dbReference type="GO" id="GO:0008760">
    <property type="term" value="F:UDP-N-acetylglucosamine 1-carboxyvinyltransferase activity"/>
    <property type="evidence" value="ECO:0007669"/>
    <property type="project" value="UniProtKB-UniRule"/>
</dbReference>
<dbReference type="GO" id="GO:0051301">
    <property type="term" value="P:cell division"/>
    <property type="evidence" value="ECO:0007669"/>
    <property type="project" value="UniProtKB-KW"/>
</dbReference>
<dbReference type="GO" id="GO:0071555">
    <property type="term" value="P:cell wall organization"/>
    <property type="evidence" value="ECO:0007669"/>
    <property type="project" value="UniProtKB-KW"/>
</dbReference>
<dbReference type="GO" id="GO:0009252">
    <property type="term" value="P:peptidoglycan biosynthetic process"/>
    <property type="evidence" value="ECO:0007669"/>
    <property type="project" value="UniProtKB-UniRule"/>
</dbReference>
<dbReference type="GO" id="GO:0008360">
    <property type="term" value="P:regulation of cell shape"/>
    <property type="evidence" value="ECO:0007669"/>
    <property type="project" value="UniProtKB-KW"/>
</dbReference>
<dbReference type="GO" id="GO:0019277">
    <property type="term" value="P:UDP-N-acetylgalactosamine biosynthetic process"/>
    <property type="evidence" value="ECO:0007669"/>
    <property type="project" value="InterPro"/>
</dbReference>
<dbReference type="CDD" id="cd01555">
    <property type="entry name" value="UdpNAET"/>
    <property type="match status" value="1"/>
</dbReference>
<dbReference type="FunFam" id="3.65.10.10:FF:000002">
    <property type="entry name" value="UDP-N-acetylglucosamine 1-carboxyvinyltransferase"/>
    <property type="match status" value="1"/>
</dbReference>
<dbReference type="Gene3D" id="3.65.10.10">
    <property type="entry name" value="Enolpyruvate transferase domain"/>
    <property type="match status" value="2"/>
</dbReference>
<dbReference type="HAMAP" id="MF_00111">
    <property type="entry name" value="MurA"/>
    <property type="match status" value="1"/>
</dbReference>
<dbReference type="InterPro" id="IPR001986">
    <property type="entry name" value="Enolpyruvate_Tfrase_dom"/>
</dbReference>
<dbReference type="InterPro" id="IPR036968">
    <property type="entry name" value="Enolpyruvate_Tfrase_sf"/>
</dbReference>
<dbReference type="InterPro" id="IPR050068">
    <property type="entry name" value="MurA_subfamily"/>
</dbReference>
<dbReference type="InterPro" id="IPR013792">
    <property type="entry name" value="RNA3'P_cycl/enolpyr_Trfase_a/b"/>
</dbReference>
<dbReference type="InterPro" id="IPR005750">
    <property type="entry name" value="UDP_GlcNAc_COvinyl_MurA"/>
</dbReference>
<dbReference type="NCBIfam" id="TIGR01072">
    <property type="entry name" value="murA"/>
    <property type="match status" value="1"/>
</dbReference>
<dbReference type="NCBIfam" id="NF006873">
    <property type="entry name" value="PRK09369.1"/>
    <property type="match status" value="1"/>
</dbReference>
<dbReference type="PANTHER" id="PTHR43783">
    <property type="entry name" value="UDP-N-ACETYLGLUCOSAMINE 1-CARBOXYVINYLTRANSFERASE"/>
    <property type="match status" value="1"/>
</dbReference>
<dbReference type="PANTHER" id="PTHR43783:SF1">
    <property type="entry name" value="UDP-N-ACETYLGLUCOSAMINE 1-CARBOXYVINYLTRANSFERASE"/>
    <property type="match status" value="1"/>
</dbReference>
<dbReference type="Pfam" id="PF00275">
    <property type="entry name" value="EPSP_synthase"/>
    <property type="match status" value="1"/>
</dbReference>
<dbReference type="SUPFAM" id="SSF55205">
    <property type="entry name" value="EPT/RTPC-like"/>
    <property type="match status" value="1"/>
</dbReference>
<proteinExistence type="inferred from homology"/>